<evidence type="ECO:0000255" key="1">
    <source>
        <dbReference type="HAMAP-Rule" id="MF_01202"/>
    </source>
</evidence>
<gene>
    <name evidence="1" type="primary">dadA</name>
    <name type="ordered locus">BamMC406_0944</name>
</gene>
<accession>B1YV52</accession>
<keyword id="KW-0274">FAD</keyword>
<keyword id="KW-0285">Flavoprotein</keyword>
<keyword id="KW-0560">Oxidoreductase</keyword>
<name>DADA_BURA4</name>
<protein>
    <recommendedName>
        <fullName evidence="1">D-amino acid dehydrogenase</fullName>
        <ecNumber evidence="1">1.4.99.-</ecNumber>
    </recommendedName>
</protein>
<comment type="function">
    <text evidence="1">Oxidative deamination of D-amino acids.</text>
</comment>
<comment type="catalytic activity">
    <reaction evidence="1">
        <text>a D-alpha-amino acid + A + H2O = a 2-oxocarboxylate + AH2 + NH4(+)</text>
        <dbReference type="Rhea" id="RHEA:18125"/>
        <dbReference type="ChEBI" id="CHEBI:13193"/>
        <dbReference type="ChEBI" id="CHEBI:15377"/>
        <dbReference type="ChEBI" id="CHEBI:17499"/>
        <dbReference type="ChEBI" id="CHEBI:28938"/>
        <dbReference type="ChEBI" id="CHEBI:35179"/>
        <dbReference type="ChEBI" id="CHEBI:59871"/>
    </reaction>
</comment>
<comment type="cofactor">
    <cofactor evidence="1">
        <name>FAD</name>
        <dbReference type="ChEBI" id="CHEBI:57692"/>
    </cofactor>
</comment>
<comment type="pathway">
    <text>Amino-acid degradation; D-alanine degradation; NH(3) and pyruvate from D-alanine: step 1/1.</text>
</comment>
<comment type="similarity">
    <text evidence="1">Belongs to the DadA oxidoreductase family.</text>
</comment>
<dbReference type="EC" id="1.4.99.-" evidence="1"/>
<dbReference type="EMBL" id="CP001025">
    <property type="protein sequence ID" value="ACB63435.1"/>
    <property type="molecule type" value="Genomic_DNA"/>
</dbReference>
<dbReference type="RefSeq" id="WP_012363359.1">
    <property type="nucleotide sequence ID" value="NC_010551.1"/>
</dbReference>
<dbReference type="SMR" id="B1YV52"/>
<dbReference type="KEGG" id="bac:BamMC406_0944"/>
<dbReference type="HOGENOM" id="CLU_007884_9_2_4"/>
<dbReference type="OrthoDB" id="18526at2"/>
<dbReference type="UniPathway" id="UPA00043">
    <property type="reaction ID" value="UER00498"/>
</dbReference>
<dbReference type="Proteomes" id="UP000001680">
    <property type="component" value="Chromosome 1"/>
</dbReference>
<dbReference type="GO" id="GO:0005737">
    <property type="term" value="C:cytoplasm"/>
    <property type="evidence" value="ECO:0007669"/>
    <property type="project" value="TreeGrafter"/>
</dbReference>
<dbReference type="GO" id="GO:0005886">
    <property type="term" value="C:plasma membrane"/>
    <property type="evidence" value="ECO:0007669"/>
    <property type="project" value="TreeGrafter"/>
</dbReference>
<dbReference type="GO" id="GO:0008718">
    <property type="term" value="F:D-amino-acid dehydrogenase activity"/>
    <property type="evidence" value="ECO:0007669"/>
    <property type="project" value="UniProtKB-UniRule"/>
</dbReference>
<dbReference type="GO" id="GO:0055130">
    <property type="term" value="P:D-alanine catabolic process"/>
    <property type="evidence" value="ECO:0007669"/>
    <property type="project" value="UniProtKB-UniPathway"/>
</dbReference>
<dbReference type="FunFam" id="3.50.50.60:FF:000020">
    <property type="entry name" value="D-amino acid dehydrogenase"/>
    <property type="match status" value="1"/>
</dbReference>
<dbReference type="Gene3D" id="3.30.9.10">
    <property type="entry name" value="D-Amino Acid Oxidase, subunit A, domain 2"/>
    <property type="match status" value="1"/>
</dbReference>
<dbReference type="Gene3D" id="3.50.50.60">
    <property type="entry name" value="FAD/NAD(P)-binding domain"/>
    <property type="match status" value="2"/>
</dbReference>
<dbReference type="HAMAP" id="MF_01202">
    <property type="entry name" value="DadA"/>
    <property type="match status" value="1"/>
</dbReference>
<dbReference type="InterPro" id="IPR023080">
    <property type="entry name" value="DadA"/>
</dbReference>
<dbReference type="InterPro" id="IPR006076">
    <property type="entry name" value="FAD-dep_OxRdtase"/>
</dbReference>
<dbReference type="InterPro" id="IPR036188">
    <property type="entry name" value="FAD/NAD-bd_sf"/>
</dbReference>
<dbReference type="NCBIfam" id="NF001933">
    <property type="entry name" value="PRK00711.1"/>
    <property type="match status" value="1"/>
</dbReference>
<dbReference type="PANTHER" id="PTHR13847:SF280">
    <property type="entry name" value="D-AMINO ACID DEHYDROGENASE"/>
    <property type="match status" value="1"/>
</dbReference>
<dbReference type="PANTHER" id="PTHR13847">
    <property type="entry name" value="SARCOSINE DEHYDROGENASE-RELATED"/>
    <property type="match status" value="1"/>
</dbReference>
<dbReference type="Pfam" id="PF01266">
    <property type="entry name" value="DAO"/>
    <property type="match status" value="1"/>
</dbReference>
<dbReference type="SUPFAM" id="SSF54373">
    <property type="entry name" value="FAD-linked reductases, C-terminal domain"/>
    <property type="match status" value="1"/>
</dbReference>
<dbReference type="SUPFAM" id="SSF51905">
    <property type="entry name" value="FAD/NAD(P)-binding domain"/>
    <property type="match status" value="1"/>
</dbReference>
<reference key="1">
    <citation type="submission" date="2008-04" db="EMBL/GenBank/DDBJ databases">
        <title>Complete sequence of chromosome 1 of Burkholderia ambifaria MC40-6.</title>
        <authorList>
            <person name="Copeland A."/>
            <person name="Lucas S."/>
            <person name="Lapidus A."/>
            <person name="Glavina del Rio T."/>
            <person name="Dalin E."/>
            <person name="Tice H."/>
            <person name="Pitluck S."/>
            <person name="Chain P."/>
            <person name="Malfatti S."/>
            <person name="Shin M."/>
            <person name="Vergez L."/>
            <person name="Lang D."/>
            <person name="Schmutz J."/>
            <person name="Larimer F."/>
            <person name="Land M."/>
            <person name="Hauser L."/>
            <person name="Kyrpides N."/>
            <person name="Lykidis A."/>
            <person name="Ramette A."/>
            <person name="Konstantinidis K."/>
            <person name="Tiedje J."/>
            <person name="Richardson P."/>
        </authorList>
    </citation>
    <scope>NUCLEOTIDE SEQUENCE [LARGE SCALE GENOMIC DNA]</scope>
    <source>
        <strain>MC40-6</strain>
    </source>
</reference>
<sequence length="428" mass="45970">MRVVVLGSGVVGVASAYYLARAGHEVTVIDREAGPALETSFANAGQISPGYAAPWAAPGVPLKAVKWMFEKHAPLAIRLDGTRFQLQWMWQMLRNCTADRYAVNKGRMVRLAEYSRDCLQALRADTGIQYEGRTGGTLQLFRTQQQLDGAAKDIAVLQEANVPFELLSPAELKNAEPALAAVSHKLTGGLRLPGDETGDCQLFTTRLAALAESLGVKFRYNTPIDALAIAGGRIAGVQCGSETVRADAYVVALGSYSTSFISNLMKIPVYPLKGYSITAPIVNDAAAPVSTVLDETYKIAITRFDQRIRVGGMAEIVGFDKNLRAARRETLEMCVNDLFPGGGDTSKATFWTGLRPMTPDGTPIVGRTPVSNLFLNTGHGTLGWTMSCGSGQLLADLISGKKPAIQADDLSVHRYLKDVAGQTRPAYA</sequence>
<organism>
    <name type="scientific">Burkholderia ambifaria (strain MC40-6)</name>
    <dbReference type="NCBI Taxonomy" id="398577"/>
    <lineage>
        <taxon>Bacteria</taxon>
        <taxon>Pseudomonadati</taxon>
        <taxon>Pseudomonadota</taxon>
        <taxon>Betaproteobacteria</taxon>
        <taxon>Burkholderiales</taxon>
        <taxon>Burkholderiaceae</taxon>
        <taxon>Burkholderia</taxon>
        <taxon>Burkholderia cepacia complex</taxon>
    </lineage>
</organism>
<feature type="chain" id="PRO_1000138641" description="D-amino acid dehydrogenase">
    <location>
        <begin position="1"/>
        <end position="428"/>
    </location>
</feature>
<feature type="binding site" evidence="1">
    <location>
        <begin position="3"/>
        <end position="17"/>
    </location>
    <ligand>
        <name>FAD</name>
        <dbReference type="ChEBI" id="CHEBI:57692"/>
    </ligand>
</feature>
<proteinExistence type="inferred from homology"/>